<name>SYI_CUTAK</name>
<accession>Q6AB89</accession>
<gene>
    <name evidence="1" type="primary">ileS</name>
    <name type="ordered locus">PPA0216</name>
</gene>
<proteinExistence type="inferred from homology"/>
<reference key="1">
    <citation type="journal article" date="2004" name="Science">
        <title>The complete genome sequence of Propionibacterium acnes, a commensal of human skin.</title>
        <authorList>
            <person name="Brueggemann H."/>
            <person name="Henne A."/>
            <person name="Hoster F."/>
            <person name="Liesegang H."/>
            <person name="Wiezer A."/>
            <person name="Strittmatter A."/>
            <person name="Hujer S."/>
            <person name="Duerre P."/>
            <person name="Gottschalk G."/>
        </authorList>
    </citation>
    <scope>NUCLEOTIDE SEQUENCE [LARGE SCALE GENOMIC DNA]</scope>
    <source>
        <strain>DSM 16379 / KPA171202</strain>
    </source>
</reference>
<feature type="chain" id="PRO_0000098555" description="Isoleucine--tRNA ligase">
    <location>
        <begin position="1"/>
        <end position="1114"/>
    </location>
</feature>
<feature type="short sequence motif" description="'HIGH' region">
    <location>
        <begin position="61"/>
        <end position="71"/>
    </location>
</feature>
<feature type="short sequence motif" description="'KMSKS' region">
    <location>
        <begin position="640"/>
        <end position="644"/>
    </location>
</feature>
<feature type="binding site" evidence="1">
    <location>
        <position position="643"/>
    </location>
    <ligand>
        <name>ATP</name>
        <dbReference type="ChEBI" id="CHEBI:30616"/>
    </ligand>
</feature>
<dbReference type="EC" id="6.1.1.5" evidence="1"/>
<dbReference type="EMBL" id="AE017283">
    <property type="protein sequence ID" value="AAT81977.1"/>
    <property type="molecule type" value="Genomic_DNA"/>
</dbReference>
<dbReference type="RefSeq" id="WP_002536188.1">
    <property type="nucleotide sequence ID" value="NZ_CP025935.1"/>
</dbReference>
<dbReference type="SMR" id="Q6AB89"/>
<dbReference type="EnsemblBacteria" id="AAT81977">
    <property type="protein sequence ID" value="AAT81977"/>
    <property type="gene ID" value="PPA0216"/>
</dbReference>
<dbReference type="KEGG" id="pac:PPA0216"/>
<dbReference type="PATRIC" id="fig|267747.3.peg.226"/>
<dbReference type="eggNOG" id="COG0060">
    <property type="taxonomic scope" value="Bacteria"/>
</dbReference>
<dbReference type="HOGENOM" id="CLU_001493_1_1_11"/>
<dbReference type="Proteomes" id="UP000000603">
    <property type="component" value="Chromosome"/>
</dbReference>
<dbReference type="GO" id="GO:0005737">
    <property type="term" value="C:cytoplasm"/>
    <property type="evidence" value="ECO:0007669"/>
    <property type="project" value="UniProtKB-SubCell"/>
</dbReference>
<dbReference type="GO" id="GO:0002161">
    <property type="term" value="F:aminoacyl-tRNA deacylase activity"/>
    <property type="evidence" value="ECO:0007669"/>
    <property type="project" value="InterPro"/>
</dbReference>
<dbReference type="GO" id="GO:0005524">
    <property type="term" value="F:ATP binding"/>
    <property type="evidence" value="ECO:0007669"/>
    <property type="project" value="UniProtKB-UniRule"/>
</dbReference>
<dbReference type="GO" id="GO:0004822">
    <property type="term" value="F:isoleucine-tRNA ligase activity"/>
    <property type="evidence" value="ECO:0007669"/>
    <property type="project" value="UniProtKB-UniRule"/>
</dbReference>
<dbReference type="GO" id="GO:0000049">
    <property type="term" value="F:tRNA binding"/>
    <property type="evidence" value="ECO:0007669"/>
    <property type="project" value="InterPro"/>
</dbReference>
<dbReference type="GO" id="GO:0008270">
    <property type="term" value="F:zinc ion binding"/>
    <property type="evidence" value="ECO:0007669"/>
    <property type="project" value="UniProtKB-UniRule"/>
</dbReference>
<dbReference type="GO" id="GO:0006428">
    <property type="term" value="P:isoleucyl-tRNA aminoacylation"/>
    <property type="evidence" value="ECO:0007669"/>
    <property type="project" value="UniProtKB-UniRule"/>
</dbReference>
<dbReference type="CDD" id="cd07961">
    <property type="entry name" value="Anticodon_Ia_Ile_ABEc"/>
    <property type="match status" value="1"/>
</dbReference>
<dbReference type="FunFam" id="3.40.50.620:FF:000063">
    <property type="entry name" value="Isoleucine--tRNA ligase"/>
    <property type="match status" value="1"/>
</dbReference>
<dbReference type="FunFam" id="3.40.50.620:FF:000075">
    <property type="entry name" value="Isoleucine--tRNA ligase"/>
    <property type="match status" value="1"/>
</dbReference>
<dbReference type="Gene3D" id="3.40.50.620">
    <property type="entry name" value="HUPs"/>
    <property type="match status" value="2"/>
</dbReference>
<dbReference type="Gene3D" id="1.10.730.10">
    <property type="entry name" value="Isoleucyl-tRNA Synthetase, Domain 1"/>
    <property type="match status" value="1"/>
</dbReference>
<dbReference type="Gene3D" id="3.90.740.10">
    <property type="entry name" value="Valyl/Leucyl/Isoleucyl-tRNA synthetase, editing domain"/>
    <property type="match status" value="1"/>
</dbReference>
<dbReference type="HAMAP" id="MF_02003">
    <property type="entry name" value="Ile_tRNA_synth_type2"/>
    <property type="match status" value="1"/>
</dbReference>
<dbReference type="InterPro" id="IPR002300">
    <property type="entry name" value="aa-tRNA-synth_Ia"/>
</dbReference>
<dbReference type="InterPro" id="IPR033709">
    <property type="entry name" value="Anticodon_Ile_ABEc"/>
</dbReference>
<dbReference type="InterPro" id="IPR002301">
    <property type="entry name" value="Ile-tRNA-ligase"/>
</dbReference>
<dbReference type="InterPro" id="IPR023586">
    <property type="entry name" value="Ile-tRNA-ligase_type2"/>
</dbReference>
<dbReference type="InterPro" id="IPR013155">
    <property type="entry name" value="M/V/L/I-tRNA-synth_anticd-bd"/>
</dbReference>
<dbReference type="InterPro" id="IPR014729">
    <property type="entry name" value="Rossmann-like_a/b/a_fold"/>
</dbReference>
<dbReference type="InterPro" id="IPR009080">
    <property type="entry name" value="tRNAsynth_Ia_anticodon-bd"/>
</dbReference>
<dbReference type="InterPro" id="IPR009008">
    <property type="entry name" value="Val/Leu/Ile-tRNA-synth_edit"/>
</dbReference>
<dbReference type="NCBIfam" id="TIGR00392">
    <property type="entry name" value="ileS"/>
    <property type="match status" value="1"/>
</dbReference>
<dbReference type="PANTHER" id="PTHR42780:SF1">
    <property type="entry name" value="ISOLEUCINE--TRNA LIGASE, CYTOPLASMIC"/>
    <property type="match status" value="1"/>
</dbReference>
<dbReference type="PANTHER" id="PTHR42780">
    <property type="entry name" value="SOLEUCYL-TRNA SYNTHETASE"/>
    <property type="match status" value="1"/>
</dbReference>
<dbReference type="Pfam" id="PF08264">
    <property type="entry name" value="Anticodon_1"/>
    <property type="match status" value="1"/>
</dbReference>
<dbReference type="Pfam" id="PF19302">
    <property type="entry name" value="DUF5915"/>
    <property type="match status" value="1"/>
</dbReference>
<dbReference type="Pfam" id="PF00133">
    <property type="entry name" value="tRNA-synt_1"/>
    <property type="match status" value="1"/>
</dbReference>
<dbReference type="PRINTS" id="PR00984">
    <property type="entry name" value="TRNASYNTHILE"/>
</dbReference>
<dbReference type="SUPFAM" id="SSF47323">
    <property type="entry name" value="Anticodon-binding domain of a subclass of class I aminoacyl-tRNA synthetases"/>
    <property type="match status" value="1"/>
</dbReference>
<dbReference type="SUPFAM" id="SSF52374">
    <property type="entry name" value="Nucleotidylyl transferase"/>
    <property type="match status" value="1"/>
</dbReference>
<dbReference type="SUPFAM" id="SSF50677">
    <property type="entry name" value="ValRS/IleRS/LeuRS editing domain"/>
    <property type="match status" value="1"/>
</dbReference>
<sequence length="1114" mass="124981">MTDVNPVRSDNCRQYNNVPPQIDLPAMDHEIIDLWARQHTFDKSLEATKDGQPWTFFEGPPTANGQPGTHHVEARVFKDIFPRFKTMQGFRVDRKAGWDCHGLPVELAVEKELGFSGKPDIEKYGVEPFNAKCRESVTRHVDAFSELTERMGYWVNMDEAYWTMSPSYVESVWWGLKRIWDKGLLGEDHRVAPYCPRCGTTLSDHELAQGYQDDRDPSIYVRFPVTSGPLAGRAKLLVWTTTPWTLVSNTAVAVHPEVRYVVAHRDPVPEGSDAVATASAEDPASQDLIIAEPLFEKVLGEGWSLTGESFLGSQMELWTYERPYNFLEWPKTERVTVDGRPTPADANFVVLADYVTVEDGTGLVHQAPAFGADDLQTCRRYGLPLVNPIRPDGTFEESVPLVGGQFFKTADKPLCEDLDRRGVLFRLEMHWHSYPHCWRCDTHLIYYAQPSWYIRTTKVKEQLLAQNEVTTWYPETIKHGRFGDWLENNIDWAVSRSRYWGTPLPLWRNDDDRSDVICVESLAELSQYVGRDLTGMDPHRPFIDEVTFTRDGHTYHRVPEVADAWLDSGSMPFAQWGYPHVPGSKEKFESHYPGDFICEAIDQTRGWFYTMMAVGTLVFDESSYRNVLCLGHILAEDGRKMSKHLGNILLPIPLMDSHGADALRWFMAADGSPWSARRVGDETIQETVRKVLLTYWNTVSFQVLYARANGWSPAQGTQHDADPARGFGGVVPPAVGSRGFGGVVPPAVTERHVLDRWLVSATNVLVRDVTEALNNFDTQRVGNLIAQFVDELSNWYVRRSRRRFWDGDEGALWTLHETLETLTKLMAPMVPFITERVWQDLFVTTNPHGPESVHLASWPVADDSLIDESLSESMDLARRIVELGRGARAEAKAKIRQPLSRALISGAALAKLDEDLQAEIRSELNVMALDSFTAAGDLVDHCAKGNFRALGKKYAKATPKVAAAIAAADPEWLASELAIKGSVEMDVPEVEGGKAVVTADDVIVSERPREGWSVVNEQGETVALDLEITPELARAGQAREVIRFVQDSRKKAGLDVSDRITLAWSASADLATAIEEHAEQISQEVLAVQMSREPRADDWAVEPDLGLAVKVVKV</sequence>
<keyword id="KW-0030">Aminoacyl-tRNA synthetase</keyword>
<keyword id="KW-0067">ATP-binding</keyword>
<keyword id="KW-0963">Cytoplasm</keyword>
<keyword id="KW-0436">Ligase</keyword>
<keyword id="KW-0479">Metal-binding</keyword>
<keyword id="KW-0547">Nucleotide-binding</keyword>
<keyword id="KW-0648">Protein biosynthesis</keyword>
<keyword id="KW-0862">Zinc</keyword>
<comment type="function">
    <text evidence="1">Catalyzes the attachment of isoleucine to tRNA(Ile). As IleRS can inadvertently accommodate and process structurally similar amino acids such as valine, to avoid such errors it has two additional distinct tRNA(Ile)-dependent editing activities. One activity is designated as 'pretransfer' editing and involves the hydrolysis of activated Val-AMP. The other activity is designated 'posttransfer' editing and involves deacylation of mischarged Val-tRNA(Ile).</text>
</comment>
<comment type="catalytic activity">
    <reaction evidence="1">
        <text>tRNA(Ile) + L-isoleucine + ATP = L-isoleucyl-tRNA(Ile) + AMP + diphosphate</text>
        <dbReference type="Rhea" id="RHEA:11060"/>
        <dbReference type="Rhea" id="RHEA-COMP:9666"/>
        <dbReference type="Rhea" id="RHEA-COMP:9695"/>
        <dbReference type="ChEBI" id="CHEBI:30616"/>
        <dbReference type="ChEBI" id="CHEBI:33019"/>
        <dbReference type="ChEBI" id="CHEBI:58045"/>
        <dbReference type="ChEBI" id="CHEBI:78442"/>
        <dbReference type="ChEBI" id="CHEBI:78528"/>
        <dbReference type="ChEBI" id="CHEBI:456215"/>
        <dbReference type="EC" id="6.1.1.5"/>
    </reaction>
</comment>
<comment type="cofactor">
    <cofactor evidence="1">
        <name>Zn(2+)</name>
        <dbReference type="ChEBI" id="CHEBI:29105"/>
    </cofactor>
</comment>
<comment type="subunit">
    <text evidence="1">Monomer.</text>
</comment>
<comment type="subcellular location">
    <subcellularLocation>
        <location evidence="1">Cytoplasm</location>
    </subcellularLocation>
</comment>
<comment type="domain">
    <text evidence="1">IleRS has two distinct active sites: one for aminoacylation and one for editing. The misactivated valine is translocated from the active site to the editing site, which sterically excludes the correctly activated isoleucine. The single editing site contains two valyl binding pockets, one specific for each substrate (Val-AMP or Val-tRNA(Ile)).</text>
</comment>
<comment type="similarity">
    <text evidence="1">Belongs to the class-I aminoacyl-tRNA synthetase family. IleS type 2 subfamily.</text>
</comment>
<organism>
    <name type="scientific">Cutibacterium acnes (strain DSM 16379 / KPA171202)</name>
    <name type="common">Propionibacterium acnes</name>
    <dbReference type="NCBI Taxonomy" id="267747"/>
    <lineage>
        <taxon>Bacteria</taxon>
        <taxon>Bacillati</taxon>
        <taxon>Actinomycetota</taxon>
        <taxon>Actinomycetes</taxon>
        <taxon>Propionibacteriales</taxon>
        <taxon>Propionibacteriaceae</taxon>
        <taxon>Cutibacterium</taxon>
    </lineage>
</organism>
<protein>
    <recommendedName>
        <fullName evidence="1">Isoleucine--tRNA ligase</fullName>
        <ecNumber evidence="1">6.1.1.5</ecNumber>
    </recommendedName>
    <alternativeName>
        <fullName evidence="1">Isoleucyl-tRNA synthetase</fullName>
        <shortName evidence="1">IleRS</shortName>
    </alternativeName>
</protein>
<evidence type="ECO:0000255" key="1">
    <source>
        <dbReference type="HAMAP-Rule" id="MF_02003"/>
    </source>
</evidence>